<proteinExistence type="inferred from homology"/>
<name>HSCB_SALHS</name>
<dbReference type="EMBL" id="CP001120">
    <property type="protein sequence ID" value="ACF68639.1"/>
    <property type="molecule type" value="Genomic_DNA"/>
</dbReference>
<dbReference type="RefSeq" id="WP_000384395.1">
    <property type="nucleotide sequence ID" value="NC_011083.1"/>
</dbReference>
<dbReference type="SMR" id="B4TDB3"/>
<dbReference type="KEGG" id="seh:SeHA_C2802"/>
<dbReference type="HOGENOM" id="CLU_068529_2_0_6"/>
<dbReference type="Proteomes" id="UP000001866">
    <property type="component" value="Chromosome"/>
</dbReference>
<dbReference type="GO" id="GO:1990230">
    <property type="term" value="C:iron-sulfur cluster transfer complex"/>
    <property type="evidence" value="ECO:0007669"/>
    <property type="project" value="TreeGrafter"/>
</dbReference>
<dbReference type="GO" id="GO:0001671">
    <property type="term" value="F:ATPase activator activity"/>
    <property type="evidence" value="ECO:0007669"/>
    <property type="project" value="InterPro"/>
</dbReference>
<dbReference type="GO" id="GO:0051087">
    <property type="term" value="F:protein-folding chaperone binding"/>
    <property type="evidence" value="ECO:0007669"/>
    <property type="project" value="InterPro"/>
</dbReference>
<dbReference type="GO" id="GO:0044571">
    <property type="term" value="P:[2Fe-2S] cluster assembly"/>
    <property type="evidence" value="ECO:0007669"/>
    <property type="project" value="InterPro"/>
</dbReference>
<dbReference type="GO" id="GO:0051259">
    <property type="term" value="P:protein complex oligomerization"/>
    <property type="evidence" value="ECO:0007669"/>
    <property type="project" value="InterPro"/>
</dbReference>
<dbReference type="GO" id="GO:0006457">
    <property type="term" value="P:protein folding"/>
    <property type="evidence" value="ECO:0007669"/>
    <property type="project" value="UniProtKB-UniRule"/>
</dbReference>
<dbReference type="CDD" id="cd06257">
    <property type="entry name" value="DnaJ"/>
    <property type="match status" value="1"/>
</dbReference>
<dbReference type="FunFam" id="1.10.287.110:FF:000008">
    <property type="entry name" value="Co-chaperone protein HscB"/>
    <property type="match status" value="1"/>
</dbReference>
<dbReference type="FunFam" id="1.20.1280.20:FF:000001">
    <property type="entry name" value="Co-chaperone protein HscB"/>
    <property type="match status" value="1"/>
</dbReference>
<dbReference type="Gene3D" id="1.10.287.110">
    <property type="entry name" value="DnaJ domain"/>
    <property type="match status" value="1"/>
</dbReference>
<dbReference type="Gene3D" id="1.20.1280.20">
    <property type="entry name" value="HscB, C-terminal domain"/>
    <property type="match status" value="1"/>
</dbReference>
<dbReference type="HAMAP" id="MF_00682">
    <property type="entry name" value="HscB"/>
    <property type="match status" value="1"/>
</dbReference>
<dbReference type="InterPro" id="IPR001623">
    <property type="entry name" value="DnaJ_domain"/>
</dbReference>
<dbReference type="InterPro" id="IPR004640">
    <property type="entry name" value="HscB"/>
</dbReference>
<dbReference type="InterPro" id="IPR036386">
    <property type="entry name" value="HscB_C_sf"/>
</dbReference>
<dbReference type="InterPro" id="IPR009073">
    <property type="entry name" value="HscB_oligo_C"/>
</dbReference>
<dbReference type="InterPro" id="IPR036869">
    <property type="entry name" value="J_dom_sf"/>
</dbReference>
<dbReference type="NCBIfam" id="TIGR00714">
    <property type="entry name" value="hscB"/>
    <property type="match status" value="1"/>
</dbReference>
<dbReference type="NCBIfam" id="NF003449">
    <property type="entry name" value="PRK05014.1"/>
    <property type="match status" value="1"/>
</dbReference>
<dbReference type="PANTHER" id="PTHR14021">
    <property type="entry name" value="IRON-SULFUR CLUSTER CO-CHAPERONE PROTEIN HSCB"/>
    <property type="match status" value="1"/>
</dbReference>
<dbReference type="PANTHER" id="PTHR14021:SF15">
    <property type="entry name" value="IRON-SULFUR CLUSTER CO-CHAPERONE PROTEIN HSCB"/>
    <property type="match status" value="1"/>
</dbReference>
<dbReference type="Pfam" id="PF07743">
    <property type="entry name" value="HSCB_C"/>
    <property type="match status" value="1"/>
</dbReference>
<dbReference type="SMART" id="SM00271">
    <property type="entry name" value="DnaJ"/>
    <property type="match status" value="1"/>
</dbReference>
<dbReference type="SUPFAM" id="SSF46565">
    <property type="entry name" value="Chaperone J-domain"/>
    <property type="match status" value="1"/>
</dbReference>
<dbReference type="SUPFAM" id="SSF47144">
    <property type="entry name" value="HSC20 (HSCB), C-terminal oligomerisation domain"/>
    <property type="match status" value="1"/>
</dbReference>
<dbReference type="PROSITE" id="PS50076">
    <property type="entry name" value="DNAJ_2"/>
    <property type="match status" value="1"/>
</dbReference>
<reference key="1">
    <citation type="journal article" date="2011" name="J. Bacteriol.">
        <title>Comparative genomics of 28 Salmonella enterica isolates: evidence for CRISPR-mediated adaptive sublineage evolution.</title>
        <authorList>
            <person name="Fricke W.F."/>
            <person name="Mammel M.K."/>
            <person name="McDermott P.F."/>
            <person name="Tartera C."/>
            <person name="White D.G."/>
            <person name="Leclerc J.E."/>
            <person name="Ravel J."/>
            <person name="Cebula T.A."/>
        </authorList>
    </citation>
    <scope>NUCLEOTIDE SEQUENCE [LARGE SCALE GENOMIC DNA]</scope>
    <source>
        <strain>SL476</strain>
    </source>
</reference>
<accession>B4TDB3</accession>
<protein>
    <recommendedName>
        <fullName evidence="1">Co-chaperone protein HscB</fullName>
    </recommendedName>
    <alternativeName>
        <fullName evidence="1">Hsc20</fullName>
    </alternativeName>
</protein>
<feature type="chain" id="PRO_1000131752" description="Co-chaperone protein HscB">
    <location>
        <begin position="1"/>
        <end position="171"/>
    </location>
</feature>
<feature type="domain" description="J" evidence="1">
    <location>
        <begin position="2"/>
        <end position="74"/>
    </location>
</feature>
<gene>
    <name evidence="1" type="primary">hscB</name>
    <name type="ordered locus">SeHA_C2802</name>
</gene>
<comment type="function">
    <text evidence="1">Co-chaperone involved in the maturation of iron-sulfur cluster-containing proteins. Seems to help targeting proteins to be folded toward HscA.</text>
</comment>
<comment type="subunit">
    <text evidence="1">Interacts with HscA and stimulates its ATPase activity. Interacts with IscU.</text>
</comment>
<comment type="similarity">
    <text evidence="1">Belongs to the HscB family.</text>
</comment>
<organism>
    <name type="scientific">Salmonella heidelberg (strain SL476)</name>
    <dbReference type="NCBI Taxonomy" id="454169"/>
    <lineage>
        <taxon>Bacteria</taxon>
        <taxon>Pseudomonadati</taxon>
        <taxon>Pseudomonadota</taxon>
        <taxon>Gammaproteobacteria</taxon>
        <taxon>Enterobacterales</taxon>
        <taxon>Enterobacteriaceae</taxon>
        <taxon>Salmonella</taxon>
    </lineage>
</organism>
<keyword id="KW-0143">Chaperone</keyword>
<sequence length="171" mass="19992">MDYFTLFGLPARYQIDTQALSLRFQDLQRQYHPDKFANGTQAQQLAAVQQSATINQAWQTLRHPLTRAEYLLSLHGFDLASEQHTVRDTAFLMEQLTLREELDDIEQSKDDARLESFIKRVQKMFDARLQQLVEQLDNAAWDTAADTVRKLRFLDKLRSSAEQLEEKLLDF</sequence>
<evidence type="ECO:0000255" key="1">
    <source>
        <dbReference type="HAMAP-Rule" id="MF_00682"/>
    </source>
</evidence>